<proteinExistence type="inferred from homology"/>
<feature type="chain" id="PRO_0000058964" description="HPr kinase/phosphorylase">
    <location>
        <begin position="1"/>
        <end position="321"/>
    </location>
</feature>
<feature type="region of interest" description="Important for the catalytic mechanism of both phosphorylation and dephosphorylation" evidence="1">
    <location>
        <begin position="206"/>
        <end position="215"/>
    </location>
</feature>
<feature type="region of interest" description="Important for the catalytic mechanism of dephosphorylation" evidence="1">
    <location>
        <begin position="269"/>
        <end position="274"/>
    </location>
</feature>
<feature type="active site" evidence="1">
    <location>
        <position position="143"/>
    </location>
</feature>
<feature type="active site" evidence="1">
    <location>
        <position position="164"/>
    </location>
</feature>
<feature type="active site" description="Proton acceptor; for phosphorylation activity. Proton donor; for dephosphorylation activity" evidence="1">
    <location>
        <position position="182"/>
    </location>
</feature>
<feature type="active site" evidence="1">
    <location>
        <position position="248"/>
    </location>
</feature>
<feature type="binding site" evidence="1">
    <location>
        <begin position="158"/>
        <end position="165"/>
    </location>
    <ligand>
        <name>ATP</name>
        <dbReference type="ChEBI" id="CHEBI:30616"/>
    </ligand>
</feature>
<feature type="binding site" evidence="1">
    <location>
        <position position="165"/>
    </location>
    <ligand>
        <name>Mg(2+)</name>
        <dbReference type="ChEBI" id="CHEBI:18420"/>
    </ligand>
</feature>
<feature type="binding site" evidence="1">
    <location>
        <position position="207"/>
    </location>
    <ligand>
        <name>Mg(2+)</name>
        <dbReference type="ChEBI" id="CHEBI:18420"/>
    </ligand>
</feature>
<evidence type="ECO:0000255" key="1">
    <source>
        <dbReference type="HAMAP-Rule" id="MF_01249"/>
    </source>
</evidence>
<keyword id="KW-0067">ATP-binding</keyword>
<keyword id="KW-0418">Kinase</keyword>
<keyword id="KW-0460">Magnesium</keyword>
<keyword id="KW-0479">Metal-binding</keyword>
<keyword id="KW-0511">Multifunctional enzyme</keyword>
<keyword id="KW-0547">Nucleotide-binding</keyword>
<keyword id="KW-0723">Serine/threonine-protein kinase</keyword>
<keyword id="KW-0808">Transferase</keyword>
<organism>
    <name type="scientific">Leptospira interrogans serogroup Icterohaemorrhagiae serovar copenhageni (strain Fiocruz L1-130)</name>
    <dbReference type="NCBI Taxonomy" id="267671"/>
    <lineage>
        <taxon>Bacteria</taxon>
        <taxon>Pseudomonadati</taxon>
        <taxon>Spirochaetota</taxon>
        <taxon>Spirochaetia</taxon>
        <taxon>Leptospirales</taxon>
        <taxon>Leptospiraceae</taxon>
        <taxon>Leptospira</taxon>
    </lineage>
</organism>
<sequence>MSMPGINVSNLLNEHEELGLRLLAGQKGLTNRINMSEINRPGLSLTGFYESFAHDRIQIFGKGEWAYITSRTPEDLEKIAAEFFGFHLNCIIFTHGNMPPPIFMENCEKLGIPLMISEVSTHKFITLISGILDRSLAPRTMRHGVLIEVFGIGILLSGKSGVGKSETALELIERGHRLVADDMVEIRRLSESYLIGTCSDLLRHHMEIRGLGILNIKDIFGIGSVRDHKLIELIIHLEEWTEGKDFDRTGLENPTEELLGVQIPLIRVPVRPGRNIPIIVETAAMNQRLRKLGKNAAQEFNQKLSQYLQQGKVERNPTQNQ</sequence>
<accession>Q72S40</accession>
<comment type="function">
    <text evidence="1">Catalyzes the ATP- as well as the pyrophosphate-dependent phosphorylation of a specific serine residue in HPr, a phosphocarrier protein of the phosphoenolpyruvate-dependent sugar phosphotransferase system (PTS). HprK/P also catalyzes the pyrophosphate-producing, inorganic phosphate-dependent dephosphorylation (phosphorolysis) of seryl-phosphorylated HPr (P-Ser-HPr).</text>
</comment>
<comment type="catalytic activity">
    <reaction evidence="1">
        <text>[HPr protein]-L-serine + ATP = [HPr protein]-O-phospho-L-serine + ADP + H(+)</text>
        <dbReference type="Rhea" id="RHEA:46600"/>
        <dbReference type="Rhea" id="RHEA-COMP:11602"/>
        <dbReference type="Rhea" id="RHEA-COMP:11603"/>
        <dbReference type="ChEBI" id="CHEBI:15378"/>
        <dbReference type="ChEBI" id="CHEBI:29999"/>
        <dbReference type="ChEBI" id="CHEBI:30616"/>
        <dbReference type="ChEBI" id="CHEBI:83421"/>
        <dbReference type="ChEBI" id="CHEBI:456216"/>
    </reaction>
</comment>
<comment type="catalytic activity">
    <reaction evidence="1">
        <text>[HPr protein]-O-phospho-L-serine + phosphate + H(+) = [HPr protein]-L-serine + diphosphate</text>
        <dbReference type="Rhea" id="RHEA:46604"/>
        <dbReference type="Rhea" id="RHEA-COMP:11602"/>
        <dbReference type="Rhea" id="RHEA-COMP:11603"/>
        <dbReference type="ChEBI" id="CHEBI:15378"/>
        <dbReference type="ChEBI" id="CHEBI:29999"/>
        <dbReference type="ChEBI" id="CHEBI:33019"/>
        <dbReference type="ChEBI" id="CHEBI:43474"/>
        <dbReference type="ChEBI" id="CHEBI:83421"/>
    </reaction>
</comment>
<comment type="cofactor">
    <cofactor evidence="1">
        <name>Mg(2+)</name>
        <dbReference type="ChEBI" id="CHEBI:18420"/>
    </cofactor>
</comment>
<comment type="subunit">
    <text evidence="1">Homohexamer.</text>
</comment>
<comment type="domain">
    <text evidence="1">The Walker A ATP-binding motif also binds Pi and PPi.</text>
</comment>
<comment type="miscellaneous">
    <text evidence="1">Both phosphorylation and phosphorolysis are carried out by the same active site and suggest a common mechanism for both reactions.</text>
</comment>
<comment type="similarity">
    <text evidence="1">Belongs to the HPrK/P family.</text>
</comment>
<dbReference type="EC" id="2.7.11.-" evidence="1"/>
<dbReference type="EC" id="2.7.4.-" evidence="1"/>
<dbReference type="EMBL" id="AE016823">
    <property type="protein sequence ID" value="AAS70142.1"/>
    <property type="molecule type" value="Genomic_DNA"/>
</dbReference>
<dbReference type="RefSeq" id="WP_000062490.1">
    <property type="nucleotide sequence ID" value="NC_005823.1"/>
</dbReference>
<dbReference type="SMR" id="Q72S40"/>
<dbReference type="GeneID" id="61144845"/>
<dbReference type="KEGG" id="lic:LIC_11546"/>
<dbReference type="HOGENOM" id="CLU_052030_0_1_12"/>
<dbReference type="Proteomes" id="UP000007037">
    <property type="component" value="Chromosome I"/>
</dbReference>
<dbReference type="GO" id="GO:0005524">
    <property type="term" value="F:ATP binding"/>
    <property type="evidence" value="ECO:0007669"/>
    <property type="project" value="UniProtKB-UniRule"/>
</dbReference>
<dbReference type="GO" id="GO:0000287">
    <property type="term" value="F:magnesium ion binding"/>
    <property type="evidence" value="ECO:0007669"/>
    <property type="project" value="UniProtKB-UniRule"/>
</dbReference>
<dbReference type="GO" id="GO:0000155">
    <property type="term" value="F:phosphorelay sensor kinase activity"/>
    <property type="evidence" value="ECO:0007669"/>
    <property type="project" value="InterPro"/>
</dbReference>
<dbReference type="GO" id="GO:0004674">
    <property type="term" value="F:protein serine/threonine kinase activity"/>
    <property type="evidence" value="ECO:0007669"/>
    <property type="project" value="UniProtKB-KW"/>
</dbReference>
<dbReference type="GO" id="GO:0004712">
    <property type="term" value="F:protein serine/threonine/tyrosine kinase activity"/>
    <property type="evidence" value="ECO:0007669"/>
    <property type="project" value="UniProtKB-UniRule"/>
</dbReference>
<dbReference type="GO" id="GO:0006109">
    <property type="term" value="P:regulation of carbohydrate metabolic process"/>
    <property type="evidence" value="ECO:0007669"/>
    <property type="project" value="UniProtKB-UniRule"/>
</dbReference>
<dbReference type="CDD" id="cd01918">
    <property type="entry name" value="HprK_C"/>
    <property type="match status" value="1"/>
</dbReference>
<dbReference type="FunFam" id="3.40.1390.20:FF:000006">
    <property type="entry name" value="HPr kinase/phosphorylase"/>
    <property type="match status" value="1"/>
</dbReference>
<dbReference type="FunFam" id="3.40.50.300:FF:000174">
    <property type="entry name" value="HPr kinase/phosphorylase"/>
    <property type="match status" value="1"/>
</dbReference>
<dbReference type="Gene3D" id="3.40.1390.20">
    <property type="entry name" value="HprK N-terminal domain-like"/>
    <property type="match status" value="1"/>
</dbReference>
<dbReference type="Gene3D" id="3.40.50.300">
    <property type="entry name" value="P-loop containing nucleotide triphosphate hydrolases"/>
    <property type="match status" value="1"/>
</dbReference>
<dbReference type="HAMAP" id="MF_01249">
    <property type="entry name" value="HPr_kinase"/>
    <property type="match status" value="1"/>
</dbReference>
<dbReference type="InterPro" id="IPR003755">
    <property type="entry name" value="HPr(Ser)_kin/Pase"/>
</dbReference>
<dbReference type="InterPro" id="IPR011104">
    <property type="entry name" value="Hpr_kin/Pase_C"/>
</dbReference>
<dbReference type="InterPro" id="IPR011126">
    <property type="entry name" value="Hpr_kin/Pase_Hpr_N"/>
</dbReference>
<dbReference type="InterPro" id="IPR027417">
    <property type="entry name" value="P-loop_NTPase"/>
</dbReference>
<dbReference type="InterPro" id="IPR028979">
    <property type="entry name" value="Ser_kin/Pase_Hpr-like_N_sf"/>
</dbReference>
<dbReference type="NCBIfam" id="TIGR00679">
    <property type="entry name" value="hpr-ser"/>
    <property type="match status" value="1"/>
</dbReference>
<dbReference type="PANTHER" id="PTHR30305:SF1">
    <property type="entry name" value="HPR KINASE_PHOSPHORYLASE"/>
    <property type="match status" value="1"/>
</dbReference>
<dbReference type="PANTHER" id="PTHR30305">
    <property type="entry name" value="PROTEIN YJDM-RELATED"/>
    <property type="match status" value="1"/>
</dbReference>
<dbReference type="Pfam" id="PF07475">
    <property type="entry name" value="Hpr_kinase_C"/>
    <property type="match status" value="1"/>
</dbReference>
<dbReference type="Pfam" id="PF02603">
    <property type="entry name" value="Hpr_kinase_N"/>
    <property type="match status" value="1"/>
</dbReference>
<dbReference type="SUPFAM" id="SSF75138">
    <property type="entry name" value="HprK N-terminal domain-like"/>
    <property type="match status" value="1"/>
</dbReference>
<dbReference type="SUPFAM" id="SSF53795">
    <property type="entry name" value="PEP carboxykinase-like"/>
    <property type="match status" value="1"/>
</dbReference>
<reference key="1">
    <citation type="journal article" date="2004" name="J. Bacteriol.">
        <title>Comparative genomics of two Leptospira interrogans serovars reveals novel insights into physiology and pathogenesis.</title>
        <authorList>
            <person name="Nascimento A.L.T.O."/>
            <person name="Ko A.I."/>
            <person name="Martins E.A.L."/>
            <person name="Monteiro-Vitorello C.B."/>
            <person name="Ho P.L."/>
            <person name="Haake D.A."/>
            <person name="Verjovski-Almeida S."/>
            <person name="Hartskeerl R.A."/>
            <person name="Marques M.V."/>
            <person name="Oliveira M.C."/>
            <person name="Menck C.F.M."/>
            <person name="Leite L.C.C."/>
            <person name="Carrer H."/>
            <person name="Coutinho L.L."/>
            <person name="Degrave W.M."/>
            <person name="Dellagostin O.A."/>
            <person name="El-Dorry H."/>
            <person name="Ferro E.S."/>
            <person name="Ferro M.I.T."/>
            <person name="Furlan L.R."/>
            <person name="Gamberini M."/>
            <person name="Giglioti E.A."/>
            <person name="Goes-Neto A."/>
            <person name="Goldman G.H."/>
            <person name="Goldman M.H.S."/>
            <person name="Harakava R."/>
            <person name="Jeronimo S.M.B."/>
            <person name="Junqueira-de-Azevedo I.L.M."/>
            <person name="Kimura E.T."/>
            <person name="Kuramae E.E."/>
            <person name="Lemos E.G.M."/>
            <person name="Lemos M.V.F."/>
            <person name="Marino C.L."/>
            <person name="Nunes L.R."/>
            <person name="de Oliveira R.C."/>
            <person name="Pereira G.G."/>
            <person name="Reis M.S."/>
            <person name="Schriefer A."/>
            <person name="Siqueira W.J."/>
            <person name="Sommer P."/>
            <person name="Tsai S.M."/>
            <person name="Simpson A.J.G."/>
            <person name="Ferro J.A."/>
            <person name="Camargo L.E.A."/>
            <person name="Kitajima J.P."/>
            <person name="Setubal J.C."/>
            <person name="Van Sluys M.A."/>
        </authorList>
    </citation>
    <scope>NUCLEOTIDE SEQUENCE [LARGE SCALE GENOMIC DNA]</scope>
    <source>
        <strain>Fiocruz L1-130</strain>
    </source>
</reference>
<gene>
    <name evidence="1" type="primary">hprK</name>
    <name type="ordered locus">LIC_11546</name>
</gene>
<protein>
    <recommendedName>
        <fullName evidence="1">HPr kinase/phosphorylase</fullName>
        <shortName evidence="1">HPrK/P</shortName>
        <ecNumber evidence="1">2.7.11.-</ecNumber>
        <ecNumber evidence="1">2.7.4.-</ecNumber>
    </recommendedName>
    <alternativeName>
        <fullName evidence="1">HPr(Ser) kinase/phosphorylase</fullName>
    </alternativeName>
</protein>
<name>HPRK_LEPIC</name>